<gene>
    <name evidence="1" type="primary">selA</name>
    <name type="ordered locus">PA4808</name>
</gene>
<dbReference type="EC" id="2.9.1.1" evidence="1"/>
<dbReference type="EMBL" id="AE004091">
    <property type="protein sequence ID" value="AAG08194.1"/>
    <property type="molecule type" value="Genomic_DNA"/>
</dbReference>
<dbReference type="PIR" id="E83046">
    <property type="entry name" value="E83046"/>
</dbReference>
<dbReference type="RefSeq" id="NP_253496.1">
    <property type="nucleotide sequence ID" value="NC_002516.2"/>
</dbReference>
<dbReference type="RefSeq" id="WP_003148232.1">
    <property type="nucleotide sequence ID" value="NZ_QZGE01000002.1"/>
</dbReference>
<dbReference type="SMR" id="Q9HV01"/>
<dbReference type="FunCoup" id="Q9HV01">
    <property type="interactions" value="113"/>
</dbReference>
<dbReference type="STRING" id="208964.PA4808"/>
<dbReference type="PaxDb" id="208964-PA4808"/>
<dbReference type="GeneID" id="880198"/>
<dbReference type="KEGG" id="pae:PA4808"/>
<dbReference type="PATRIC" id="fig|208964.12.peg.5037"/>
<dbReference type="PseudoCAP" id="PA4808"/>
<dbReference type="HOGENOM" id="CLU_038142_1_0_6"/>
<dbReference type="InParanoid" id="Q9HV01"/>
<dbReference type="OrthoDB" id="9787096at2"/>
<dbReference type="PhylomeDB" id="Q9HV01"/>
<dbReference type="BioCyc" id="PAER208964:G1FZ6-4922-MONOMER"/>
<dbReference type="UniPathway" id="UPA00906">
    <property type="reaction ID" value="UER00896"/>
</dbReference>
<dbReference type="Proteomes" id="UP000002438">
    <property type="component" value="Chromosome"/>
</dbReference>
<dbReference type="GO" id="GO:0005737">
    <property type="term" value="C:cytoplasm"/>
    <property type="evidence" value="ECO:0007669"/>
    <property type="project" value="UniProtKB-SubCell"/>
</dbReference>
<dbReference type="GO" id="GO:0004125">
    <property type="term" value="F:L-seryl-tRNA(Sec) selenium transferase activity"/>
    <property type="evidence" value="ECO:0000318"/>
    <property type="project" value="GO_Central"/>
</dbReference>
<dbReference type="GO" id="GO:0001717">
    <property type="term" value="P:conversion of seryl-tRNAsec to selenocys-tRNAsec"/>
    <property type="evidence" value="ECO:0007669"/>
    <property type="project" value="UniProtKB-UniRule"/>
</dbReference>
<dbReference type="GO" id="GO:0001514">
    <property type="term" value="P:selenocysteine incorporation"/>
    <property type="evidence" value="ECO:0007669"/>
    <property type="project" value="UniProtKB-UniRule"/>
</dbReference>
<dbReference type="FunFam" id="3.40.640.10:FF:000028">
    <property type="entry name" value="L-seryl-tRNA(Sec) selenium transferase"/>
    <property type="match status" value="1"/>
</dbReference>
<dbReference type="Gene3D" id="3.90.1150.180">
    <property type="match status" value="1"/>
</dbReference>
<dbReference type="Gene3D" id="3.40.640.10">
    <property type="entry name" value="Type I PLP-dependent aspartate aminotransferase-like (Major domain)"/>
    <property type="match status" value="1"/>
</dbReference>
<dbReference type="HAMAP" id="MF_00423">
    <property type="entry name" value="SelA"/>
    <property type="match status" value="1"/>
</dbReference>
<dbReference type="InterPro" id="IPR015424">
    <property type="entry name" value="PyrdxlP-dep_Trfase"/>
</dbReference>
<dbReference type="InterPro" id="IPR015421">
    <property type="entry name" value="PyrdxlP-dep_Trfase_major"/>
</dbReference>
<dbReference type="InterPro" id="IPR018319">
    <property type="entry name" value="SelA-like"/>
</dbReference>
<dbReference type="InterPro" id="IPR004534">
    <property type="entry name" value="SelA_trans"/>
</dbReference>
<dbReference type="InterPro" id="IPR025862">
    <property type="entry name" value="SelA_trans_N_dom"/>
</dbReference>
<dbReference type="NCBIfam" id="TIGR00474">
    <property type="entry name" value="selA"/>
    <property type="match status" value="1"/>
</dbReference>
<dbReference type="PANTHER" id="PTHR32328">
    <property type="entry name" value="L-SERYL-TRNA(SEC) SELENIUM TRANSFERASE"/>
    <property type="match status" value="1"/>
</dbReference>
<dbReference type="PANTHER" id="PTHR32328:SF0">
    <property type="entry name" value="L-SERYL-TRNA(SEC) SELENIUM TRANSFERASE"/>
    <property type="match status" value="1"/>
</dbReference>
<dbReference type="Pfam" id="PF12390">
    <property type="entry name" value="Se-cys_synth_N"/>
    <property type="match status" value="1"/>
</dbReference>
<dbReference type="Pfam" id="PF03841">
    <property type="entry name" value="SelA"/>
    <property type="match status" value="1"/>
</dbReference>
<dbReference type="SUPFAM" id="SSF53383">
    <property type="entry name" value="PLP-dependent transferases"/>
    <property type="match status" value="1"/>
</dbReference>
<protein>
    <recommendedName>
        <fullName evidence="1">L-seryl-tRNA(Sec) selenium transferase</fullName>
        <ecNumber evidence="1">2.9.1.1</ecNumber>
    </recommendedName>
    <alternativeName>
        <fullName evidence="1">Selenocysteine synthase</fullName>
        <shortName evidence="1">Sec synthase</shortName>
    </alternativeName>
    <alternativeName>
        <fullName evidence="1">Selenocysteinyl-tRNA(Sec) synthase</fullName>
    </alternativeName>
</protein>
<sequence>MSSVRLPSVDRLLRSAAAAPLHQRYGREALLATLRDLLDELREPARHGALAEIELSEAVLAGRAGERLAAQHASRVRRVFNLTGTVLHTNLGRALLPDEAIEAITLAARYPLNLEFDLASGKRGDRDDLIAGLIRELTGAEAVTVVNNNAAAVLLALNSLGARKEGIISRGELIEIGGAFRIPDIMARAGVRLHEVGTTNRTHAKDYEAAIGPRSGLLMRVHTSNYSVQGFTASVPTAQLAAIAHGHGLPLLEDLGSGTLVDLTRWGLPKEPTVQEALADGADIVTFSGDKLLGGPQAGLILGNRELIGRIKKNPLKRALRVDKLTLAALEAVLGLYRDPDRLAERLTTLRLLSRPAAEIRAQAERLAPALGEALGEGWEVAVVDALGMIGSGAQPVARLASAALCLRPRQPRRLRGRALRNLEEALRGLPLPVIGRLDDDALWLDLRQLDDEPAFLAQLPRLRSELS</sequence>
<evidence type="ECO:0000255" key="1">
    <source>
        <dbReference type="HAMAP-Rule" id="MF_00423"/>
    </source>
</evidence>
<feature type="chain" id="PRO_0000189612" description="L-seryl-tRNA(Sec) selenium transferase">
    <location>
        <begin position="1"/>
        <end position="468"/>
    </location>
</feature>
<feature type="modified residue" description="N6-(pyridoxal phosphate)lysine" evidence="1">
    <location>
        <position position="291"/>
    </location>
</feature>
<name>SELA_PSEAE</name>
<comment type="function">
    <text evidence="1">Converts seryl-tRNA(Sec) to selenocysteinyl-tRNA(Sec) required for selenoprotein biosynthesis.</text>
</comment>
<comment type="catalytic activity">
    <reaction evidence="1">
        <text>L-seryl-tRNA(Sec) + selenophosphate + H(+) = L-selenocysteinyl-tRNA(Sec) + phosphate</text>
        <dbReference type="Rhea" id="RHEA:22728"/>
        <dbReference type="Rhea" id="RHEA-COMP:9742"/>
        <dbReference type="Rhea" id="RHEA-COMP:9743"/>
        <dbReference type="ChEBI" id="CHEBI:15378"/>
        <dbReference type="ChEBI" id="CHEBI:16144"/>
        <dbReference type="ChEBI" id="CHEBI:43474"/>
        <dbReference type="ChEBI" id="CHEBI:78533"/>
        <dbReference type="ChEBI" id="CHEBI:78573"/>
        <dbReference type="EC" id="2.9.1.1"/>
    </reaction>
</comment>
<comment type="cofactor">
    <cofactor evidence="1">
        <name>pyridoxal 5'-phosphate</name>
        <dbReference type="ChEBI" id="CHEBI:597326"/>
    </cofactor>
</comment>
<comment type="pathway">
    <text evidence="1">Aminoacyl-tRNA biosynthesis; selenocysteinyl-tRNA(Sec) biosynthesis; selenocysteinyl-tRNA(Sec) from L-seryl-tRNA(Sec) (bacterial route): step 1/1.</text>
</comment>
<comment type="subcellular location">
    <subcellularLocation>
        <location evidence="1">Cytoplasm</location>
    </subcellularLocation>
</comment>
<comment type="similarity">
    <text evidence="1">Belongs to the SelA family.</text>
</comment>
<keyword id="KW-0963">Cytoplasm</keyword>
<keyword id="KW-0648">Protein biosynthesis</keyword>
<keyword id="KW-0663">Pyridoxal phosphate</keyword>
<keyword id="KW-1185">Reference proteome</keyword>
<keyword id="KW-0711">Selenium</keyword>
<keyword id="KW-0808">Transferase</keyword>
<reference key="1">
    <citation type="journal article" date="2000" name="Nature">
        <title>Complete genome sequence of Pseudomonas aeruginosa PAO1, an opportunistic pathogen.</title>
        <authorList>
            <person name="Stover C.K."/>
            <person name="Pham X.-Q.T."/>
            <person name="Erwin A.L."/>
            <person name="Mizoguchi S.D."/>
            <person name="Warrener P."/>
            <person name="Hickey M.J."/>
            <person name="Brinkman F.S.L."/>
            <person name="Hufnagle W.O."/>
            <person name="Kowalik D.J."/>
            <person name="Lagrou M."/>
            <person name="Garber R.L."/>
            <person name="Goltry L."/>
            <person name="Tolentino E."/>
            <person name="Westbrock-Wadman S."/>
            <person name="Yuan Y."/>
            <person name="Brody L.L."/>
            <person name="Coulter S.N."/>
            <person name="Folger K.R."/>
            <person name="Kas A."/>
            <person name="Larbig K."/>
            <person name="Lim R.M."/>
            <person name="Smith K.A."/>
            <person name="Spencer D.H."/>
            <person name="Wong G.K.-S."/>
            <person name="Wu Z."/>
            <person name="Paulsen I.T."/>
            <person name="Reizer J."/>
            <person name="Saier M.H. Jr."/>
            <person name="Hancock R.E.W."/>
            <person name="Lory S."/>
            <person name="Olson M.V."/>
        </authorList>
    </citation>
    <scope>NUCLEOTIDE SEQUENCE [LARGE SCALE GENOMIC DNA]</scope>
    <source>
        <strain>ATCC 15692 / DSM 22644 / CIP 104116 / JCM 14847 / LMG 12228 / 1C / PRS 101 / PAO1</strain>
    </source>
</reference>
<proteinExistence type="inferred from homology"/>
<accession>Q9HV01</accession>
<organism>
    <name type="scientific">Pseudomonas aeruginosa (strain ATCC 15692 / DSM 22644 / CIP 104116 / JCM 14847 / LMG 12228 / 1C / PRS 101 / PAO1)</name>
    <dbReference type="NCBI Taxonomy" id="208964"/>
    <lineage>
        <taxon>Bacteria</taxon>
        <taxon>Pseudomonadati</taxon>
        <taxon>Pseudomonadota</taxon>
        <taxon>Gammaproteobacteria</taxon>
        <taxon>Pseudomonadales</taxon>
        <taxon>Pseudomonadaceae</taxon>
        <taxon>Pseudomonas</taxon>
    </lineage>
</organism>